<feature type="chain" id="PRO_0000075982" description="Erythronate-4-phosphate dehydrogenase">
    <location>
        <begin position="1"/>
        <end position="380"/>
    </location>
</feature>
<feature type="active site" evidence="1 4">
    <location>
        <position position="208"/>
    </location>
</feature>
<feature type="active site" evidence="1 4">
    <location>
        <position position="237"/>
    </location>
</feature>
<feature type="active site" description="Proton donor" evidence="1 4">
    <location>
        <position position="254"/>
    </location>
</feature>
<feature type="binding site" evidence="1 4">
    <location>
        <position position="45"/>
    </location>
    <ligand>
        <name>substrate</name>
    </ligand>
</feature>
<feature type="binding site" evidence="1 4">
    <location>
        <position position="66"/>
    </location>
    <ligand>
        <name>substrate</name>
    </ligand>
</feature>
<feature type="binding site" evidence="1 3">
    <location>
        <begin position="126"/>
        <end position="127"/>
    </location>
    <ligand>
        <name>NAD(+)</name>
        <dbReference type="ChEBI" id="CHEBI:57540"/>
    </ligand>
</feature>
<feature type="binding site" evidence="1 3">
    <location>
        <position position="146"/>
    </location>
    <ligand>
        <name>NAD(+)</name>
        <dbReference type="ChEBI" id="CHEBI:57540"/>
    </ligand>
</feature>
<feature type="binding site" evidence="1 3">
    <location>
        <position position="175"/>
    </location>
    <ligand>
        <name>NAD(+)</name>
        <dbReference type="ChEBI" id="CHEBI:57540"/>
    </ligand>
</feature>
<feature type="binding site" evidence="1 3">
    <location>
        <begin position="206"/>
        <end position="208"/>
    </location>
    <ligand>
        <name>NAD(+)</name>
        <dbReference type="ChEBI" id="CHEBI:57540"/>
    </ligand>
</feature>
<feature type="binding site" evidence="1 3">
    <location>
        <position position="232"/>
    </location>
    <ligand>
        <name>NAD(+)</name>
        <dbReference type="ChEBI" id="CHEBI:57540"/>
    </ligand>
</feature>
<feature type="binding site" evidence="1 3">
    <location>
        <position position="257"/>
    </location>
    <ligand>
        <name>NAD(+)</name>
        <dbReference type="ChEBI" id="CHEBI:57540"/>
    </ligand>
</feature>
<feature type="binding site" evidence="1 4">
    <location>
        <position position="258"/>
    </location>
    <ligand>
        <name>substrate</name>
    </ligand>
</feature>
<feature type="disulfide bond" evidence="3">
    <location>
        <begin position="65"/>
        <end position="90"/>
    </location>
</feature>
<feature type="strand" evidence="5">
    <location>
        <begin position="2"/>
        <end position="6"/>
    </location>
</feature>
<feature type="helix" evidence="5">
    <location>
        <begin position="12"/>
        <end position="16"/>
    </location>
</feature>
<feature type="helix" evidence="5">
    <location>
        <begin position="17"/>
        <end position="19"/>
    </location>
</feature>
<feature type="strand" evidence="5">
    <location>
        <begin position="20"/>
        <end position="25"/>
    </location>
</feature>
<feature type="helix" evidence="5">
    <location>
        <begin position="27"/>
        <end position="29"/>
    </location>
</feature>
<feature type="turn" evidence="5">
    <location>
        <begin position="32"/>
        <end position="37"/>
    </location>
</feature>
<feature type="strand" evidence="5">
    <location>
        <begin position="39"/>
        <end position="43"/>
    </location>
</feature>
<feature type="helix" evidence="5">
    <location>
        <begin position="51"/>
        <end position="54"/>
    </location>
</feature>
<feature type="strand" evidence="5">
    <location>
        <begin position="61"/>
        <end position="64"/>
    </location>
</feature>
<feature type="helix" evidence="5">
    <location>
        <begin position="74"/>
        <end position="80"/>
    </location>
</feature>
<feature type="strand" evidence="5">
    <location>
        <begin position="83"/>
        <end position="85"/>
    </location>
</feature>
<feature type="turn" evidence="5">
    <location>
        <begin position="88"/>
        <end position="91"/>
    </location>
</feature>
<feature type="helix" evidence="5">
    <location>
        <begin position="92"/>
        <end position="110"/>
    </location>
</feature>
<feature type="helix" evidence="5">
    <location>
        <begin position="114"/>
        <end position="116"/>
    </location>
</feature>
<feature type="strand" evidence="5">
    <location>
        <begin position="118"/>
        <end position="122"/>
    </location>
</feature>
<feature type="helix" evidence="5">
    <location>
        <begin position="126"/>
        <end position="137"/>
    </location>
</feature>
<feature type="strand" evidence="5">
    <location>
        <begin position="141"/>
        <end position="145"/>
    </location>
</feature>
<feature type="helix" evidence="5">
    <location>
        <begin position="147"/>
        <end position="152"/>
    </location>
</feature>
<feature type="helix" evidence="5">
    <location>
        <begin position="161"/>
        <end position="167"/>
    </location>
</feature>
<feature type="strand" evidence="5">
    <location>
        <begin position="169"/>
        <end position="173"/>
    </location>
</feature>
<feature type="strand" evidence="5">
    <location>
        <begin position="179"/>
        <end position="183"/>
    </location>
</feature>
<feature type="helix" evidence="5">
    <location>
        <begin position="191"/>
        <end position="195"/>
    </location>
</feature>
<feature type="strand" evidence="5">
    <location>
        <begin position="201"/>
        <end position="205"/>
    </location>
</feature>
<feature type="helix" evidence="5">
    <location>
        <begin position="209"/>
        <end position="211"/>
    </location>
</feature>
<feature type="helix" evidence="5">
    <location>
        <begin position="214"/>
        <end position="222"/>
    </location>
</feature>
<feature type="strand" evidence="5">
    <location>
        <begin position="227"/>
        <end position="232"/>
    </location>
</feature>
<feature type="turn" evidence="5">
    <location>
        <begin position="235"/>
        <end position="238"/>
    </location>
</feature>
<feature type="helix" evidence="5">
    <location>
        <begin position="242"/>
        <end position="245"/>
    </location>
</feature>
<feature type="strand" evidence="5">
    <location>
        <begin position="249"/>
        <end position="251"/>
    </location>
</feature>
<feature type="helix" evidence="5">
    <location>
        <begin position="260"/>
        <end position="278"/>
    </location>
</feature>
<feature type="helix" evidence="5">
    <location>
        <begin position="286"/>
        <end position="288"/>
    </location>
</feature>
<feature type="strand" evidence="5">
    <location>
        <begin position="294"/>
        <end position="300"/>
    </location>
</feature>
<feature type="helix" evidence="5">
    <location>
        <begin position="306"/>
        <end position="317"/>
    </location>
</feature>
<feature type="helix" evidence="5">
    <location>
        <begin position="321"/>
        <end position="329"/>
    </location>
</feature>
<feature type="helix" evidence="5">
    <location>
        <begin position="335"/>
        <end position="347"/>
    </location>
</feature>
<feature type="helix" evidence="5">
    <location>
        <begin position="355"/>
        <end position="357"/>
    </location>
</feature>
<feature type="strand" evidence="5">
    <location>
        <begin position="359"/>
        <end position="361"/>
    </location>
</feature>
<feature type="helix" evidence="5">
    <location>
        <begin position="366"/>
        <end position="375"/>
    </location>
</feature>
<feature type="strand" evidence="5">
    <location>
        <begin position="378"/>
        <end position="380"/>
    </location>
</feature>
<evidence type="ECO:0000255" key="1">
    <source>
        <dbReference type="HAMAP-Rule" id="MF_01825"/>
    </source>
</evidence>
<evidence type="ECO:0000269" key="2">
    <source>
    </source>
</evidence>
<evidence type="ECO:0000269" key="3">
    <source>
    </source>
</evidence>
<evidence type="ECO:0000305" key="4">
    <source>
    </source>
</evidence>
<evidence type="ECO:0007829" key="5">
    <source>
        <dbReference type="PDB" id="2O4C"/>
    </source>
</evidence>
<keyword id="KW-0002">3D-structure</keyword>
<keyword id="KW-0963">Cytoplasm</keyword>
<keyword id="KW-1015">Disulfide bond</keyword>
<keyword id="KW-0520">NAD</keyword>
<keyword id="KW-0560">Oxidoreductase</keyword>
<keyword id="KW-0664">Pyridoxine biosynthesis</keyword>
<keyword id="KW-1185">Reference proteome</keyword>
<reference key="1">
    <citation type="journal article" date="2000" name="Nature">
        <title>Complete genome sequence of Pseudomonas aeruginosa PAO1, an opportunistic pathogen.</title>
        <authorList>
            <person name="Stover C.K."/>
            <person name="Pham X.-Q.T."/>
            <person name="Erwin A.L."/>
            <person name="Mizoguchi S.D."/>
            <person name="Warrener P."/>
            <person name="Hickey M.J."/>
            <person name="Brinkman F.S.L."/>
            <person name="Hufnagle W.O."/>
            <person name="Kowalik D.J."/>
            <person name="Lagrou M."/>
            <person name="Garber R.L."/>
            <person name="Goltry L."/>
            <person name="Tolentino E."/>
            <person name="Westbrock-Wadman S."/>
            <person name="Yuan Y."/>
            <person name="Brody L.L."/>
            <person name="Coulter S.N."/>
            <person name="Folger K.R."/>
            <person name="Kas A."/>
            <person name="Larbig K."/>
            <person name="Lim R.M."/>
            <person name="Smith K.A."/>
            <person name="Spencer D.H."/>
            <person name="Wong G.K.-S."/>
            <person name="Wu Z."/>
            <person name="Paulsen I.T."/>
            <person name="Reizer J."/>
            <person name="Saier M.H. Jr."/>
            <person name="Hancock R.E.W."/>
            <person name="Lory S."/>
            <person name="Olson M.V."/>
        </authorList>
    </citation>
    <scope>NUCLEOTIDE SEQUENCE [LARGE SCALE GENOMIC DNA]</scope>
    <source>
        <strain>ATCC 15692 / DSM 22644 / CIP 104116 / JCM 14847 / LMG 12228 / 1C / PRS 101 / PAO1</strain>
    </source>
</reference>
<reference key="2">
    <citation type="journal article" date="2006" name="Acta Crystallogr. F">
        <title>Overexpression, crystallization and preliminary X-ray crystallographic analysis of erythronate-4-phosphate dehydrogenase from Pseudomonas aeruginosa.</title>
        <authorList>
            <person name="Ha J.Y."/>
            <person name="Lee J.H."/>
            <person name="Kim K.H."/>
            <person name="Kim D.J."/>
            <person name="Lee H.H."/>
            <person name="Kim H.-K."/>
            <person name="Yoon H.-J."/>
            <person name="Suh S.W."/>
        </authorList>
    </citation>
    <scope>CRYSTALLIZATION</scope>
    <scope>SUBUNIT</scope>
    <source>
        <strain>ATCC 15692 / DSM 22644 / CIP 104116 / JCM 14847 / LMG 12228 / 1C / PRS 101 / PAO1</strain>
    </source>
</reference>
<reference key="3">
    <citation type="journal article" date="2007" name="J. Mol. Biol.">
        <title>Crystal structure of D-erythronate-4-phosphate dehydrogenase complexed with NAD.</title>
        <authorList>
            <person name="Ha J.Y."/>
            <person name="Lee J.H."/>
            <person name="Kim K.H."/>
            <person name="Kim D.J."/>
            <person name="Lee H.H."/>
            <person name="Kim H.-K."/>
            <person name="Yoon H.-J."/>
            <person name="Suh S.W."/>
        </authorList>
    </citation>
    <scope>X-RAY CRYSTALLOGRAPHY (2.3 ANGSTROMS) IN COMPLEX WITH NAD AND PHOSPHATE OR SUBSTRATE ANALOG</scope>
    <scope>SUBUNIT</scope>
    <scope>CATALYTIC MECHANISM</scope>
    <scope>DOMAIN</scope>
    <scope>ACTIVE SITE</scope>
    <scope>DISULFIDE BOND</scope>
    <source>
        <strain>ATCC 15692 / DSM 22644 / CIP 104116 / JCM 14847 / LMG 12228 / 1C / PRS 101 / PAO1</strain>
    </source>
</reference>
<sequence length="380" mass="41002">MRILADENIPVVDAFFADQGSIRRLPGRAIDRAALAEVDVLLVRSVTEVSRAALAGSPVRFVGTCTIGTDHLDLDYFAEAGIAWSSAPGCNARGVVDYVLGCLLAMAEVRGADLAERTYGVVGAGQVGGRLVEVLRGLGWKVLVCDPPRQAREPDGEFVSLERLLAEADVISLHTPLNRDGEHPTRHLLDEPRLAALRPGTWLVNASRGAVVDNQALRRLLEGGADLEVALDVWEGEPQADPELAARCLIATPHIAGYSLEGKLRGTAQIYQAYCAWRGIAERVSLQDVLPETWLAGLQLNPGCDPAWALATLCRAVYDPRSDDAAFRRSLTGDSATRRAAFDALRKHYPPRREITGLRVATGGQAELQRVVRALGAQLV</sequence>
<name>PDXB_PSEAE</name>
<gene>
    <name evidence="1" type="primary">pdxB</name>
    <name type="ordered locus">PA1375</name>
</gene>
<dbReference type="EC" id="1.1.1.290" evidence="1"/>
<dbReference type="EMBL" id="AE004091">
    <property type="protein sequence ID" value="AAG04764.1"/>
    <property type="molecule type" value="Genomic_DNA"/>
</dbReference>
<dbReference type="PIR" id="C83473">
    <property type="entry name" value="C83473"/>
</dbReference>
<dbReference type="RefSeq" id="NP_250066.1">
    <property type="nucleotide sequence ID" value="NC_002516.2"/>
</dbReference>
<dbReference type="RefSeq" id="WP_003112396.1">
    <property type="nucleotide sequence ID" value="NZ_QZGE01000005.1"/>
</dbReference>
<dbReference type="PDB" id="2O4C">
    <property type="method" value="X-ray"/>
    <property type="resolution" value="2.30 A"/>
    <property type="chains" value="A/B=1-380"/>
</dbReference>
<dbReference type="PDBsum" id="2O4C"/>
<dbReference type="SMR" id="Q9I3W9"/>
<dbReference type="FunCoup" id="Q9I3W9">
    <property type="interactions" value="170"/>
</dbReference>
<dbReference type="STRING" id="208964.PA1375"/>
<dbReference type="PaxDb" id="208964-PA1375"/>
<dbReference type="GeneID" id="881132"/>
<dbReference type="KEGG" id="pae:PA1375"/>
<dbReference type="PATRIC" id="fig|208964.12.peg.1427"/>
<dbReference type="PseudoCAP" id="PA1375"/>
<dbReference type="HOGENOM" id="CLU_019796_4_0_6"/>
<dbReference type="InParanoid" id="Q9I3W9"/>
<dbReference type="OrthoDB" id="9770208at2"/>
<dbReference type="PhylomeDB" id="Q9I3W9"/>
<dbReference type="BioCyc" id="PAER208964:G1FZ6-1401-MONOMER"/>
<dbReference type="BRENDA" id="1.1.1.290">
    <property type="organism ID" value="5087"/>
</dbReference>
<dbReference type="UniPathway" id="UPA00244">
    <property type="reaction ID" value="UER00310"/>
</dbReference>
<dbReference type="EvolutionaryTrace" id="Q9I3W9"/>
<dbReference type="Proteomes" id="UP000002438">
    <property type="component" value="Chromosome"/>
</dbReference>
<dbReference type="GO" id="GO:0005829">
    <property type="term" value="C:cytosol"/>
    <property type="evidence" value="ECO:0000318"/>
    <property type="project" value="GO_Central"/>
</dbReference>
<dbReference type="GO" id="GO:0033711">
    <property type="term" value="F:4-phosphoerythronate dehydrogenase activity"/>
    <property type="evidence" value="ECO:0000318"/>
    <property type="project" value="GO_Central"/>
</dbReference>
<dbReference type="GO" id="GO:0051287">
    <property type="term" value="F:NAD binding"/>
    <property type="evidence" value="ECO:0007669"/>
    <property type="project" value="InterPro"/>
</dbReference>
<dbReference type="GO" id="GO:0046983">
    <property type="term" value="F:protein dimerization activity"/>
    <property type="evidence" value="ECO:0007669"/>
    <property type="project" value="InterPro"/>
</dbReference>
<dbReference type="GO" id="GO:0036001">
    <property type="term" value="P:'de novo' pyridoxal 5'-phosphate biosynthetic process"/>
    <property type="evidence" value="ECO:0000318"/>
    <property type="project" value="GO_Central"/>
</dbReference>
<dbReference type="GO" id="GO:0008615">
    <property type="term" value="P:pyridoxine biosynthetic process"/>
    <property type="evidence" value="ECO:0000318"/>
    <property type="project" value="GO_Central"/>
</dbReference>
<dbReference type="CDD" id="cd12158">
    <property type="entry name" value="ErythrP_dh"/>
    <property type="match status" value="1"/>
</dbReference>
<dbReference type="FunFam" id="3.40.50.720:FF:000093">
    <property type="entry name" value="Erythronate-4-phosphate dehydrogenase"/>
    <property type="match status" value="1"/>
</dbReference>
<dbReference type="Gene3D" id="3.30.1370.170">
    <property type="match status" value="1"/>
</dbReference>
<dbReference type="Gene3D" id="3.40.50.720">
    <property type="entry name" value="NAD(P)-binding Rossmann-like Domain"/>
    <property type="match status" value="2"/>
</dbReference>
<dbReference type="HAMAP" id="MF_01825">
    <property type="entry name" value="PdxB"/>
    <property type="match status" value="1"/>
</dbReference>
<dbReference type="InterPro" id="IPR006139">
    <property type="entry name" value="D-isomer_2_OHA_DH_cat_dom"/>
</dbReference>
<dbReference type="InterPro" id="IPR029753">
    <property type="entry name" value="D-isomer_DH_CS"/>
</dbReference>
<dbReference type="InterPro" id="IPR006140">
    <property type="entry name" value="D-isomer_DH_NAD-bd"/>
</dbReference>
<dbReference type="InterPro" id="IPR020921">
    <property type="entry name" value="Erythronate-4-P_DHase"/>
</dbReference>
<dbReference type="InterPro" id="IPR024531">
    <property type="entry name" value="Erythronate-4-P_DHase_dimer"/>
</dbReference>
<dbReference type="InterPro" id="IPR036291">
    <property type="entry name" value="NAD(P)-bd_dom_sf"/>
</dbReference>
<dbReference type="InterPro" id="IPR038251">
    <property type="entry name" value="PdxB_dimer_sf"/>
</dbReference>
<dbReference type="NCBIfam" id="NF001309">
    <property type="entry name" value="PRK00257.1"/>
    <property type="match status" value="1"/>
</dbReference>
<dbReference type="PANTHER" id="PTHR42938">
    <property type="entry name" value="FORMATE DEHYDROGENASE 1"/>
    <property type="match status" value="1"/>
</dbReference>
<dbReference type="PANTHER" id="PTHR42938:SF9">
    <property type="entry name" value="FORMATE DEHYDROGENASE 1"/>
    <property type="match status" value="1"/>
</dbReference>
<dbReference type="Pfam" id="PF00389">
    <property type="entry name" value="2-Hacid_dh"/>
    <property type="match status" value="1"/>
</dbReference>
<dbReference type="Pfam" id="PF02826">
    <property type="entry name" value="2-Hacid_dh_C"/>
    <property type="match status" value="1"/>
</dbReference>
<dbReference type="Pfam" id="PF11890">
    <property type="entry name" value="DUF3410"/>
    <property type="match status" value="1"/>
</dbReference>
<dbReference type="SUPFAM" id="SSF52283">
    <property type="entry name" value="Formate/glycerate dehydrogenase catalytic domain-like"/>
    <property type="match status" value="1"/>
</dbReference>
<dbReference type="SUPFAM" id="SSF51735">
    <property type="entry name" value="NAD(P)-binding Rossmann-fold domains"/>
    <property type="match status" value="1"/>
</dbReference>
<dbReference type="PROSITE" id="PS00671">
    <property type="entry name" value="D_2_HYDROXYACID_DH_3"/>
    <property type="match status" value="1"/>
</dbReference>
<organism>
    <name type="scientific">Pseudomonas aeruginosa (strain ATCC 15692 / DSM 22644 / CIP 104116 / JCM 14847 / LMG 12228 / 1C / PRS 101 / PAO1)</name>
    <dbReference type="NCBI Taxonomy" id="208964"/>
    <lineage>
        <taxon>Bacteria</taxon>
        <taxon>Pseudomonadati</taxon>
        <taxon>Pseudomonadota</taxon>
        <taxon>Gammaproteobacteria</taxon>
        <taxon>Pseudomonadales</taxon>
        <taxon>Pseudomonadaceae</taxon>
        <taxon>Pseudomonas</taxon>
    </lineage>
</organism>
<proteinExistence type="evidence at protein level"/>
<accession>Q9I3W9</accession>
<protein>
    <recommendedName>
        <fullName evidence="1">Erythronate-4-phosphate dehydrogenase</fullName>
        <ecNumber evidence="1">1.1.1.290</ecNumber>
    </recommendedName>
</protein>
<comment type="function">
    <text evidence="1">Catalyzes the oxidation of erythronate-4-phosphate to 3-hydroxy-2-oxo-4-phosphonooxybutanoate.</text>
</comment>
<comment type="catalytic activity">
    <reaction evidence="1">
        <text>4-phospho-D-erythronate + NAD(+) = (R)-3-hydroxy-2-oxo-4-phosphooxybutanoate + NADH + H(+)</text>
        <dbReference type="Rhea" id="RHEA:18829"/>
        <dbReference type="ChEBI" id="CHEBI:15378"/>
        <dbReference type="ChEBI" id="CHEBI:57540"/>
        <dbReference type="ChEBI" id="CHEBI:57945"/>
        <dbReference type="ChEBI" id="CHEBI:58538"/>
        <dbReference type="ChEBI" id="CHEBI:58766"/>
        <dbReference type="EC" id="1.1.1.290"/>
    </reaction>
</comment>
<comment type="pathway">
    <text evidence="1">Cofactor biosynthesis; pyridoxine 5'-phosphate biosynthesis; pyridoxine 5'-phosphate from D-erythrose 4-phosphate: step 2/5.</text>
</comment>
<comment type="subunit">
    <text evidence="1 2 3">Homodimer.</text>
</comment>
<comment type="subcellular location">
    <subcellularLocation>
        <location evidence="1">Cytoplasm</location>
    </subcellularLocation>
</comment>
<comment type="domain">
    <text evidence="4">Each subunit can be divided into three discernible structural domains: the lid domain, the nucleotide-binding domain, and the C-terminal dimerization domain. PdxB has a unique dimeric structure among NAD-dependent D-isomer specific 2-hydroxyacid dehydrogenases due to the presence of its dimerization domain at its C-terminus.</text>
</comment>
<comment type="similarity">
    <text evidence="1">Belongs to the D-isomer specific 2-hydroxyacid dehydrogenase family. PdxB subfamily.</text>
</comment>